<dbReference type="EC" id="1.10.3.9" evidence="1"/>
<dbReference type="EMBL" id="X04465">
    <property type="protein sequence ID" value="CAA28077.1"/>
    <property type="molecule type" value="Genomic_DNA"/>
</dbReference>
<dbReference type="PIR" id="S01590">
    <property type="entry name" value="F2LVD1"/>
</dbReference>
<dbReference type="RefSeq" id="NP_039291.1">
    <property type="nucleotide sequence ID" value="NC_001319.1"/>
</dbReference>
<dbReference type="RefSeq" id="YP_009646806.1">
    <property type="nucleotide sequence ID" value="NC_042505.1"/>
</dbReference>
<dbReference type="SMR" id="P06402"/>
<dbReference type="ChEMBL" id="CHEMBL2366463"/>
<dbReference type="GeneID" id="2702541"/>
<dbReference type="GeneID" id="40386765"/>
<dbReference type="PRO" id="PR:P06402"/>
<dbReference type="GO" id="GO:0009535">
    <property type="term" value="C:chloroplast thylakoid membrane"/>
    <property type="evidence" value="ECO:0007669"/>
    <property type="project" value="UniProtKB-SubCell"/>
</dbReference>
<dbReference type="GO" id="GO:0009523">
    <property type="term" value="C:photosystem II"/>
    <property type="evidence" value="ECO:0007669"/>
    <property type="project" value="UniProtKB-KW"/>
</dbReference>
<dbReference type="GO" id="GO:0016168">
    <property type="term" value="F:chlorophyll binding"/>
    <property type="evidence" value="ECO:0007669"/>
    <property type="project" value="UniProtKB-UniRule"/>
</dbReference>
<dbReference type="GO" id="GO:0045156">
    <property type="term" value="F:electron transporter, transferring electrons within the cyclic electron transport pathway of photosynthesis activity"/>
    <property type="evidence" value="ECO:0007669"/>
    <property type="project" value="InterPro"/>
</dbReference>
<dbReference type="GO" id="GO:0005506">
    <property type="term" value="F:iron ion binding"/>
    <property type="evidence" value="ECO:0007669"/>
    <property type="project" value="UniProtKB-UniRule"/>
</dbReference>
<dbReference type="GO" id="GO:0016682">
    <property type="term" value="F:oxidoreductase activity, acting on diphenols and related substances as donors, oxygen as acceptor"/>
    <property type="evidence" value="ECO:0007669"/>
    <property type="project" value="UniProtKB-UniRule"/>
</dbReference>
<dbReference type="GO" id="GO:0010242">
    <property type="term" value="F:oxygen evolving activity"/>
    <property type="evidence" value="ECO:0007669"/>
    <property type="project" value="UniProtKB-EC"/>
</dbReference>
<dbReference type="GO" id="GO:0009772">
    <property type="term" value="P:photosynthetic electron transport in photosystem II"/>
    <property type="evidence" value="ECO:0007669"/>
    <property type="project" value="InterPro"/>
</dbReference>
<dbReference type="GO" id="GO:0009635">
    <property type="term" value="P:response to herbicide"/>
    <property type="evidence" value="ECO:0007669"/>
    <property type="project" value="UniProtKB-KW"/>
</dbReference>
<dbReference type="CDD" id="cd09289">
    <property type="entry name" value="Photosystem-II_D1"/>
    <property type="match status" value="1"/>
</dbReference>
<dbReference type="FunFam" id="1.20.85.10:FF:000002">
    <property type="entry name" value="Photosystem II protein D1"/>
    <property type="match status" value="1"/>
</dbReference>
<dbReference type="Gene3D" id="1.20.85.10">
    <property type="entry name" value="Photosystem II protein D1-like"/>
    <property type="match status" value="1"/>
</dbReference>
<dbReference type="HAMAP" id="MF_01379">
    <property type="entry name" value="PSII_PsbA_D1"/>
    <property type="match status" value="1"/>
</dbReference>
<dbReference type="InterPro" id="IPR055266">
    <property type="entry name" value="D1/D2"/>
</dbReference>
<dbReference type="InterPro" id="IPR036854">
    <property type="entry name" value="Photo_II_D1/D2_sf"/>
</dbReference>
<dbReference type="InterPro" id="IPR000484">
    <property type="entry name" value="Photo_RC_L/M"/>
</dbReference>
<dbReference type="InterPro" id="IPR055265">
    <property type="entry name" value="Photo_RC_L/M_CS"/>
</dbReference>
<dbReference type="InterPro" id="IPR005867">
    <property type="entry name" value="PSII_D1"/>
</dbReference>
<dbReference type="NCBIfam" id="TIGR01151">
    <property type="entry name" value="psbA"/>
    <property type="match status" value="1"/>
</dbReference>
<dbReference type="PANTHER" id="PTHR33149:SF12">
    <property type="entry name" value="PHOTOSYSTEM II D2 PROTEIN"/>
    <property type="match status" value="1"/>
</dbReference>
<dbReference type="PANTHER" id="PTHR33149">
    <property type="entry name" value="PHOTOSYSTEM II PROTEIN D1"/>
    <property type="match status" value="1"/>
</dbReference>
<dbReference type="Pfam" id="PF00124">
    <property type="entry name" value="Photo_RC"/>
    <property type="match status" value="1"/>
</dbReference>
<dbReference type="PRINTS" id="PR00256">
    <property type="entry name" value="REACTNCENTRE"/>
</dbReference>
<dbReference type="SUPFAM" id="SSF81483">
    <property type="entry name" value="Bacterial photosystem II reaction centre, L and M subunits"/>
    <property type="match status" value="1"/>
</dbReference>
<dbReference type="PROSITE" id="PS00244">
    <property type="entry name" value="REACTION_CENTER"/>
    <property type="match status" value="1"/>
</dbReference>
<organism>
    <name type="scientific">Marchantia polymorpha</name>
    <name type="common">Common liverwort</name>
    <name type="synonym">Marchantia aquatica</name>
    <dbReference type="NCBI Taxonomy" id="3197"/>
    <lineage>
        <taxon>Eukaryota</taxon>
        <taxon>Viridiplantae</taxon>
        <taxon>Streptophyta</taxon>
        <taxon>Embryophyta</taxon>
        <taxon>Marchantiophyta</taxon>
        <taxon>Marchantiopsida</taxon>
        <taxon>Marchantiidae</taxon>
        <taxon>Marchantiales</taxon>
        <taxon>Marchantiaceae</taxon>
        <taxon>Marchantia</taxon>
    </lineage>
</organism>
<sequence length="353" mass="38765">MTATLERRESASIWGRFCDWVTSTENRLYIGWFGVLMIPTLLTATSVFIIAFIAAPPVDIDGIREPVSGSLLYGNNIISGAIIPTSAAIGLHFYPIWEAASVDEWLYNGGPYELIVLHFLLGVACYMGREWELSYRLGMRPWIAVAYSAPVAAATAVFLIYPIGQGSFSDGMPLGISGTFNFMIVFQAEHNILMHPFHMLGVAGVFGGSLFSAMHGSLVTSSLIRETTENESANAGYKFGQEEETYNIVAAHGYFGRLIFQYASFNNSRSLHFFLAAWPVVGIWFTALGISTMAFNLNGFNFNQSVVDSQGRVINTWADIINRANLGMEVMHERNAHNFPLDLAAVEAPAVNG</sequence>
<accession>P06402</accession>
<evidence type="ECO:0000255" key="1">
    <source>
        <dbReference type="HAMAP-Rule" id="MF_01379"/>
    </source>
</evidence>
<evidence type="ECO:0000269" key="2">
    <source>
    </source>
</evidence>
<reference key="1">
    <citation type="journal article" date="1988" name="J. Mol. Biol.">
        <title>Structure and organization of Marchantia polymorpha chloroplast genome. II. Gene organization of the large single copy region from rps'12 to atpB.</title>
        <authorList>
            <person name="Umesono K."/>
            <person name="Inokuchi H."/>
            <person name="Shiki Y."/>
            <person name="Takeuchi M."/>
            <person name="Chang Z."/>
            <person name="Fukuzawa H."/>
            <person name="Kohchi T."/>
            <person name="Shirai H."/>
            <person name="Ohyama K."/>
            <person name="Ozeki H."/>
        </authorList>
    </citation>
    <scope>NUCLEOTIDE SEQUENCE [GENOMIC DNA]</scope>
</reference>
<reference key="2">
    <citation type="journal article" date="1986" name="Nature">
        <title>Chloroplast gene organization deduced from complete sequence of liverwort Marchantia polymorpha chloroplast DNA.</title>
        <authorList>
            <person name="Ohyama K."/>
            <person name="Fukuzawa H."/>
            <person name="Kohchi T."/>
            <person name="Shirai H."/>
            <person name="Sano T."/>
            <person name="Sano S."/>
            <person name="Umesono K."/>
            <person name="Shiki Y."/>
            <person name="Takeuchi M."/>
            <person name="Chang Z."/>
            <person name="Aota S."/>
            <person name="Inokuchi H."/>
            <person name="Ozeki H."/>
        </authorList>
    </citation>
    <scope>NUCLEOTIDE SEQUENCE [LARGE SCALE GENOMIC DNA]</scope>
</reference>
<reference key="3">
    <citation type="journal article" date="1998" name="FEBS Lett.">
        <title>Thylakoid protein phosphorylation in evolutionally divergent species with oxygenic photosynthesis.</title>
        <authorList>
            <person name="Pursiheimo S."/>
            <person name="Rintamaeki E."/>
            <person name="Baena-Gonzalez E."/>
            <person name="Aro E.-M."/>
        </authorList>
    </citation>
    <scope>SUBCELLULAR LOCATION</scope>
    <scope>LACK OF PHOSPHORYLATION</scope>
</reference>
<comment type="function">
    <text evidence="1">Photosystem II (PSII) is a light-driven water:plastoquinone oxidoreductase that uses light energy to abstract electrons from H(2)O, generating O(2) and a proton gradient subsequently used for ATP formation. It consists of a core antenna complex that captures photons, and an electron transfer chain that converts photonic excitation into a charge separation. The D1/D2 (PsbA/PsbD) reaction center heterodimer binds P680, the primary electron donor of PSII as well as several subsequent electron acceptors.</text>
</comment>
<comment type="catalytic activity">
    <reaction evidence="1">
        <text>2 a plastoquinone + 4 hnu + 2 H2O = 2 a plastoquinol + O2</text>
        <dbReference type="Rhea" id="RHEA:36359"/>
        <dbReference type="Rhea" id="RHEA-COMP:9561"/>
        <dbReference type="Rhea" id="RHEA-COMP:9562"/>
        <dbReference type="ChEBI" id="CHEBI:15377"/>
        <dbReference type="ChEBI" id="CHEBI:15379"/>
        <dbReference type="ChEBI" id="CHEBI:17757"/>
        <dbReference type="ChEBI" id="CHEBI:30212"/>
        <dbReference type="ChEBI" id="CHEBI:62192"/>
        <dbReference type="EC" id="1.10.3.9"/>
    </reaction>
</comment>
<comment type="cofactor">
    <text evidence="1">The D1/D2 heterodimer binds P680, chlorophylls that are the primary electron donor of PSII, and subsequent electron acceptors. It shares a non-heme iron and each subunit binds pheophytin, quinone, additional chlorophylls, carotenoids and lipids. D1 provides most of the ligands for the Mn4-Ca-O5 cluster of the oxygen-evolving complex (OEC). There is also a Cl(-1) ion associated with D1 and D2, which is required for oxygen evolution. The PSII complex binds additional chlorophylls, carotenoids and specific lipids.</text>
</comment>
<comment type="subunit">
    <text evidence="1">PSII is composed of 1 copy each of membrane proteins PsbA, PsbB, PsbC, PsbD, PsbE, PsbF, PsbH, PsbI, PsbJ, PsbK, PsbL, PsbM, PsbT, PsbX, PsbY, PsbZ, Psb30/Ycf12, at least 3 peripheral proteins of the oxygen-evolving complex and a large number of cofactors. It forms dimeric complexes.</text>
</comment>
<comment type="subcellular location">
    <subcellularLocation>
        <location evidence="1 2">Plastid</location>
        <location evidence="1 2">Chloroplast thylakoid membrane</location>
        <topology evidence="1 2">Multi-pass membrane protein</topology>
    </subcellularLocation>
</comment>
<comment type="PTM">
    <text evidence="1">Tyr-161 forms a radical intermediate that is referred to as redox-active TyrZ, YZ or Y-Z.</text>
</comment>
<comment type="PTM">
    <text evidence="1">C-terminally processed by CTPA; processing is essential to allow assembly of the oxygen-evolving complex and thus photosynthetic growth.</text>
</comment>
<comment type="miscellaneous">
    <text evidence="1">2 of the reaction center chlorophylls (ChlD1 and ChlD2) are entirely coordinated by water.</text>
</comment>
<comment type="miscellaneous">
    <text evidence="1">Herbicides such as atrazine, BNT, diuron or ioxynil bind in the Q(B) binding site and block subsequent electron transfer.</text>
</comment>
<comment type="similarity">
    <text evidence="1">Belongs to the reaction center PufL/M/PsbA/D family.</text>
</comment>
<keyword id="KW-0007">Acetylation</keyword>
<keyword id="KW-0106">Calcium</keyword>
<keyword id="KW-0148">Chlorophyll</keyword>
<keyword id="KW-0150">Chloroplast</keyword>
<keyword id="KW-0157">Chromophore</keyword>
<keyword id="KW-0249">Electron transport</keyword>
<keyword id="KW-0359">Herbicide resistance</keyword>
<keyword id="KW-0408">Iron</keyword>
<keyword id="KW-0460">Magnesium</keyword>
<keyword id="KW-0464">Manganese</keyword>
<keyword id="KW-0472">Membrane</keyword>
<keyword id="KW-0479">Metal-binding</keyword>
<keyword id="KW-0560">Oxidoreductase</keyword>
<keyword id="KW-0597">Phosphoprotein</keyword>
<keyword id="KW-0602">Photosynthesis</keyword>
<keyword id="KW-0604">Photosystem II</keyword>
<keyword id="KW-0934">Plastid</keyword>
<keyword id="KW-0793">Thylakoid</keyword>
<keyword id="KW-0812">Transmembrane</keyword>
<keyword id="KW-1133">Transmembrane helix</keyword>
<keyword id="KW-0813">Transport</keyword>
<feature type="initiator methionine" description="Removed" evidence="1">
    <location>
        <position position="1"/>
    </location>
</feature>
<feature type="chain" id="PRO_0000090450" description="Photosystem II protein D1" evidence="1">
    <location>
        <begin position="2"/>
        <end position="344"/>
    </location>
</feature>
<feature type="propeptide" id="PRO_0000316460" evidence="1">
    <location>
        <begin position="345"/>
        <end position="353"/>
    </location>
</feature>
<feature type="transmembrane region" description="Helical" evidence="1">
    <location>
        <begin position="29"/>
        <end position="46"/>
    </location>
</feature>
<feature type="transmembrane region" description="Helical" evidence="1">
    <location>
        <begin position="118"/>
        <end position="133"/>
    </location>
</feature>
<feature type="transmembrane region" description="Helical" evidence="1">
    <location>
        <begin position="142"/>
        <end position="156"/>
    </location>
</feature>
<feature type="transmembrane region" description="Helical" evidence="1">
    <location>
        <begin position="197"/>
        <end position="218"/>
    </location>
</feature>
<feature type="transmembrane region" description="Helical" evidence="1">
    <location>
        <begin position="274"/>
        <end position="288"/>
    </location>
</feature>
<feature type="binding site" description="axial binding residue" evidence="1">
    <location>
        <position position="118"/>
    </location>
    <ligand>
        <name>chlorophyll a</name>
        <dbReference type="ChEBI" id="CHEBI:58416"/>
        <label>ChlzD1</label>
    </ligand>
    <ligandPart>
        <name>Mg</name>
        <dbReference type="ChEBI" id="CHEBI:25107"/>
    </ligandPart>
</feature>
<feature type="binding site" evidence="1">
    <location>
        <position position="126"/>
    </location>
    <ligand>
        <name>pheophytin a</name>
        <dbReference type="ChEBI" id="CHEBI:136840"/>
        <label>D1</label>
    </ligand>
</feature>
<feature type="binding site" evidence="1">
    <location>
        <position position="170"/>
    </location>
    <ligand>
        <name>[CaMn4O5] cluster</name>
        <dbReference type="ChEBI" id="CHEBI:189552"/>
    </ligand>
</feature>
<feature type="binding site" evidence="1">
    <location>
        <position position="189"/>
    </location>
    <ligand>
        <name>[CaMn4O5] cluster</name>
        <dbReference type="ChEBI" id="CHEBI:189552"/>
    </ligand>
</feature>
<feature type="binding site" description="axial binding residue" evidence="1">
    <location>
        <position position="198"/>
    </location>
    <ligand>
        <name>chlorophyll a</name>
        <dbReference type="ChEBI" id="CHEBI:58416"/>
        <label>PD1</label>
    </ligand>
    <ligandPart>
        <name>Mg</name>
        <dbReference type="ChEBI" id="CHEBI:25107"/>
    </ligandPart>
</feature>
<feature type="binding site" evidence="1">
    <location>
        <position position="215"/>
    </location>
    <ligand>
        <name>a quinone</name>
        <dbReference type="ChEBI" id="CHEBI:132124"/>
        <label>B</label>
    </ligand>
</feature>
<feature type="binding site" evidence="1">
    <location>
        <position position="215"/>
    </location>
    <ligand>
        <name>Fe cation</name>
        <dbReference type="ChEBI" id="CHEBI:24875"/>
        <note>ligand shared with heterodimeric partner</note>
    </ligand>
</feature>
<feature type="binding site" evidence="1">
    <location>
        <begin position="264"/>
        <end position="265"/>
    </location>
    <ligand>
        <name>a quinone</name>
        <dbReference type="ChEBI" id="CHEBI:132124"/>
        <label>B</label>
    </ligand>
</feature>
<feature type="binding site" evidence="1">
    <location>
        <position position="272"/>
    </location>
    <ligand>
        <name>Fe cation</name>
        <dbReference type="ChEBI" id="CHEBI:24875"/>
        <note>ligand shared with heterodimeric partner</note>
    </ligand>
</feature>
<feature type="binding site" evidence="1">
    <location>
        <position position="332"/>
    </location>
    <ligand>
        <name>[CaMn4O5] cluster</name>
        <dbReference type="ChEBI" id="CHEBI:189552"/>
    </ligand>
</feature>
<feature type="binding site" evidence="1">
    <location>
        <position position="333"/>
    </location>
    <ligand>
        <name>[CaMn4O5] cluster</name>
        <dbReference type="ChEBI" id="CHEBI:189552"/>
    </ligand>
</feature>
<feature type="binding site" evidence="1">
    <location>
        <position position="342"/>
    </location>
    <ligand>
        <name>[CaMn4O5] cluster</name>
        <dbReference type="ChEBI" id="CHEBI:189552"/>
    </ligand>
</feature>
<feature type="binding site" evidence="1">
    <location>
        <position position="344"/>
    </location>
    <ligand>
        <name>[CaMn4O5] cluster</name>
        <dbReference type="ChEBI" id="CHEBI:189552"/>
    </ligand>
</feature>
<feature type="site" description="Tyrosine radical intermediate" evidence="1">
    <location>
        <position position="161"/>
    </location>
</feature>
<feature type="site" description="Stabilizes free radical intermediate" evidence="1">
    <location>
        <position position="190"/>
    </location>
</feature>
<feature type="site" description="Cleavage; by CTPA" evidence="1">
    <location>
        <begin position="344"/>
        <end position="345"/>
    </location>
</feature>
<feature type="modified residue" description="N-acetylthreonine" evidence="1">
    <location>
        <position position="2"/>
    </location>
</feature>
<feature type="modified residue" description="Phosphothreonine" evidence="1">
    <location>
        <position position="2"/>
    </location>
</feature>
<geneLocation type="chloroplast"/>
<protein>
    <recommendedName>
        <fullName evidence="1">Photosystem II protein D1</fullName>
        <shortName evidence="1">PSII D1 protein</shortName>
        <ecNumber evidence="1">1.10.3.9</ecNumber>
    </recommendedName>
    <alternativeName>
        <fullName evidence="1">Photosystem II Q(B) protein</fullName>
    </alternativeName>
</protein>
<name>PSBA_MARPO</name>
<gene>
    <name evidence="1" type="primary">psbA</name>
</gene>
<proteinExistence type="evidence at protein level"/>